<dbReference type="EC" id="5.1.1.3" evidence="1"/>
<dbReference type="EMBL" id="CP000479">
    <property type="protein sequence ID" value="ABK67897.1"/>
    <property type="molecule type" value="Genomic_DNA"/>
</dbReference>
<dbReference type="RefSeq" id="WP_009975745.1">
    <property type="nucleotide sequence ID" value="NC_008595.1"/>
</dbReference>
<dbReference type="SMR" id="A0QD02"/>
<dbReference type="GeneID" id="75269321"/>
<dbReference type="KEGG" id="mav:MAV_1555"/>
<dbReference type="HOGENOM" id="CLU_052344_0_1_11"/>
<dbReference type="UniPathway" id="UPA00219"/>
<dbReference type="Proteomes" id="UP000001574">
    <property type="component" value="Chromosome"/>
</dbReference>
<dbReference type="GO" id="GO:0008881">
    <property type="term" value="F:glutamate racemase activity"/>
    <property type="evidence" value="ECO:0007669"/>
    <property type="project" value="UniProtKB-UniRule"/>
</dbReference>
<dbReference type="GO" id="GO:0071555">
    <property type="term" value="P:cell wall organization"/>
    <property type="evidence" value="ECO:0007669"/>
    <property type="project" value="UniProtKB-KW"/>
</dbReference>
<dbReference type="GO" id="GO:0009252">
    <property type="term" value="P:peptidoglycan biosynthetic process"/>
    <property type="evidence" value="ECO:0007669"/>
    <property type="project" value="UniProtKB-UniRule"/>
</dbReference>
<dbReference type="GO" id="GO:0008360">
    <property type="term" value="P:regulation of cell shape"/>
    <property type="evidence" value="ECO:0007669"/>
    <property type="project" value="UniProtKB-KW"/>
</dbReference>
<dbReference type="FunFam" id="3.40.50.1860:FF:000001">
    <property type="entry name" value="Glutamate racemase"/>
    <property type="match status" value="1"/>
</dbReference>
<dbReference type="Gene3D" id="3.40.50.1860">
    <property type="match status" value="2"/>
</dbReference>
<dbReference type="HAMAP" id="MF_00258">
    <property type="entry name" value="Glu_racemase"/>
    <property type="match status" value="1"/>
</dbReference>
<dbReference type="InterPro" id="IPR015942">
    <property type="entry name" value="Asp/Glu/hydantoin_racemase"/>
</dbReference>
<dbReference type="InterPro" id="IPR001920">
    <property type="entry name" value="Asp/Glu_race"/>
</dbReference>
<dbReference type="InterPro" id="IPR018187">
    <property type="entry name" value="Asp/Glu_racemase_AS_1"/>
</dbReference>
<dbReference type="InterPro" id="IPR033134">
    <property type="entry name" value="Asp/Glu_racemase_AS_2"/>
</dbReference>
<dbReference type="InterPro" id="IPR004391">
    <property type="entry name" value="Glu_race"/>
</dbReference>
<dbReference type="NCBIfam" id="TIGR00067">
    <property type="entry name" value="glut_race"/>
    <property type="match status" value="1"/>
</dbReference>
<dbReference type="PANTHER" id="PTHR21198">
    <property type="entry name" value="GLUTAMATE RACEMASE"/>
    <property type="match status" value="1"/>
</dbReference>
<dbReference type="PANTHER" id="PTHR21198:SF2">
    <property type="entry name" value="GLUTAMATE RACEMASE"/>
    <property type="match status" value="1"/>
</dbReference>
<dbReference type="Pfam" id="PF01177">
    <property type="entry name" value="Asp_Glu_race"/>
    <property type="match status" value="1"/>
</dbReference>
<dbReference type="SUPFAM" id="SSF53681">
    <property type="entry name" value="Aspartate/glutamate racemase"/>
    <property type="match status" value="2"/>
</dbReference>
<dbReference type="PROSITE" id="PS00923">
    <property type="entry name" value="ASP_GLU_RACEMASE_1"/>
    <property type="match status" value="1"/>
</dbReference>
<dbReference type="PROSITE" id="PS00924">
    <property type="entry name" value="ASP_GLU_RACEMASE_2"/>
    <property type="match status" value="1"/>
</dbReference>
<feature type="chain" id="PRO_1000047583" description="Glutamate racemase">
    <location>
        <begin position="1"/>
        <end position="275"/>
    </location>
</feature>
<feature type="active site" description="Proton donor/acceptor" evidence="1">
    <location>
        <position position="75"/>
    </location>
</feature>
<feature type="active site" description="Proton donor/acceptor" evidence="1">
    <location>
        <position position="185"/>
    </location>
</feature>
<feature type="binding site" evidence="1">
    <location>
        <begin position="12"/>
        <end position="13"/>
    </location>
    <ligand>
        <name>substrate</name>
    </ligand>
</feature>
<feature type="binding site" evidence="1">
    <location>
        <begin position="44"/>
        <end position="45"/>
    </location>
    <ligand>
        <name>substrate</name>
    </ligand>
</feature>
<feature type="binding site" evidence="1">
    <location>
        <begin position="76"/>
        <end position="77"/>
    </location>
    <ligand>
        <name>substrate</name>
    </ligand>
</feature>
<feature type="binding site" evidence="1">
    <location>
        <begin position="186"/>
        <end position="187"/>
    </location>
    <ligand>
        <name>substrate</name>
    </ligand>
</feature>
<comment type="function">
    <text evidence="1">Provides the (R)-glutamate required for cell wall biosynthesis.</text>
</comment>
<comment type="catalytic activity">
    <reaction evidence="1">
        <text>L-glutamate = D-glutamate</text>
        <dbReference type="Rhea" id="RHEA:12813"/>
        <dbReference type="ChEBI" id="CHEBI:29985"/>
        <dbReference type="ChEBI" id="CHEBI:29986"/>
        <dbReference type="EC" id="5.1.1.3"/>
    </reaction>
</comment>
<comment type="pathway">
    <text evidence="1">Cell wall biogenesis; peptidoglycan biosynthesis.</text>
</comment>
<comment type="similarity">
    <text evidence="1">Belongs to the aspartate/glutamate racemases family.</text>
</comment>
<accession>A0QD02</accession>
<gene>
    <name evidence="1" type="primary">murI</name>
    <name type="ordered locus">MAV_1555</name>
</gene>
<proteinExistence type="inferred from homology"/>
<protein>
    <recommendedName>
        <fullName evidence="1">Glutamate racemase</fullName>
        <ecNumber evidence="1">5.1.1.3</ecNumber>
    </recommendedName>
</protein>
<organism>
    <name type="scientific">Mycobacterium avium (strain 104)</name>
    <dbReference type="NCBI Taxonomy" id="243243"/>
    <lineage>
        <taxon>Bacteria</taxon>
        <taxon>Bacillati</taxon>
        <taxon>Actinomycetota</taxon>
        <taxon>Actinomycetes</taxon>
        <taxon>Mycobacteriales</taxon>
        <taxon>Mycobacteriaceae</taxon>
        <taxon>Mycobacterium</taxon>
        <taxon>Mycobacterium avium complex (MAC)</taxon>
    </lineage>
</organism>
<reference key="1">
    <citation type="submission" date="2006-10" db="EMBL/GenBank/DDBJ databases">
        <authorList>
            <person name="Fleischmann R.D."/>
            <person name="Dodson R.J."/>
            <person name="Haft D.H."/>
            <person name="Merkel J.S."/>
            <person name="Nelson W.C."/>
            <person name="Fraser C.M."/>
        </authorList>
    </citation>
    <scope>NUCLEOTIDE SEQUENCE [LARGE SCALE GENOMIC DNA]</scope>
    <source>
        <strain>104</strain>
    </source>
</reference>
<evidence type="ECO:0000255" key="1">
    <source>
        <dbReference type="HAMAP-Rule" id="MF_00258"/>
    </source>
</evidence>
<keyword id="KW-0133">Cell shape</keyword>
<keyword id="KW-0961">Cell wall biogenesis/degradation</keyword>
<keyword id="KW-0413">Isomerase</keyword>
<keyword id="KW-0573">Peptidoglycan synthesis</keyword>
<sequence>MSSALAPVGIFDSGVGGLTVARAIIDQLPDEHIIYVGDTGHGPYGPLSIPEVRAHALAIGDDLVGRGVKALVIACNTASAACLRDARERYEVPVVEVILPAVRRAVATTRNGRIGVIGTQATINSHAYQDAFAAARDTEITAVACPRFVDFVERGVTSGRQVLGLAEGYLEPLQRAQVDTLVLGCTHYPLLSGLIQLAMGDNVTLVSSAEETAKEVLRVLTERDLLHPHPDDPRAAGPSRVFEATGDPEAFTRLAARFLGPAVSGVRPVHHVRID</sequence>
<name>MURI_MYCA1</name>